<keyword id="KW-0119">Carbohydrate metabolism</keyword>
<keyword id="KW-0413">Isomerase</keyword>
<keyword id="KW-0880">Kelch repeat</keyword>
<keyword id="KW-0574">Periplasm</keyword>
<keyword id="KW-0677">Repeat</keyword>
<keyword id="KW-0732">Signal</keyword>
<gene>
    <name evidence="1" type="primary">nanM</name>
    <name type="ordered locus">VVA1197</name>
</gene>
<comment type="function">
    <text evidence="1">Converts alpha-N-acetylneuranimic acid (Neu5Ac) to the beta-anomer, accelerating the equilibrium between the alpha- and beta-anomers. Probably facilitates sialidase-negative bacteria to compete successfully for limited amounts of extracellular Neu5Ac, which is likely taken up in the beta-anomer. In addition, the rapid removal of sialic acid from solution might be advantageous to the bacterium to damp down host responses.</text>
</comment>
<comment type="catalytic activity">
    <reaction evidence="1">
        <text>N-acetyl-alpha-neuraminate = N-acetyl-beta-neuraminate</text>
        <dbReference type="Rhea" id="RHEA:25233"/>
        <dbReference type="ChEBI" id="CHEBI:58705"/>
        <dbReference type="ChEBI" id="CHEBI:58770"/>
        <dbReference type="EC" id="5.1.3.24"/>
    </reaction>
</comment>
<comment type="subunit">
    <text evidence="1">Homodimer.</text>
</comment>
<comment type="subcellular location">
    <subcellularLocation>
        <location evidence="1">Periplasm</location>
    </subcellularLocation>
</comment>
<comment type="similarity">
    <text evidence="1">Belongs to the NanM family.</text>
</comment>
<dbReference type="EC" id="5.1.3.24" evidence="1"/>
<dbReference type="EMBL" id="BA000038">
    <property type="protein sequence ID" value="BAC97223.1"/>
    <property type="molecule type" value="Genomic_DNA"/>
</dbReference>
<dbReference type="RefSeq" id="WP_011152453.1">
    <property type="nucleotide sequence ID" value="NC_005140.1"/>
</dbReference>
<dbReference type="SMR" id="Q7MD39"/>
<dbReference type="STRING" id="672.VV93_v1c41240"/>
<dbReference type="KEGG" id="vvy:VVA1197"/>
<dbReference type="eggNOG" id="COG3055">
    <property type="taxonomic scope" value="Bacteria"/>
</dbReference>
<dbReference type="HOGENOM" id="CLU_061535_0_0_6"/>
<dbReference type="Proteomes" id="UP000002675">
    <property type="component" value="Chromosome II"/>
</dbReference>
<dbReference type="GO" id="GO:0042597">
    <property type="term" value="C:periplasmic space"/>
    <property type="evidence" value="ECO:0007669"/>
    <property type="project" value="UniProtKB-SubCell"/>
</dbReference>
<dbReference type="GO" id="GO:0016857">
    <property type="term" value="F:racemase and epimerase activity, acting on carbohydrates and derivatives"/>
    <property type="evidence" value="ECO:0007669"/>
    <property type="project" value="UniProtKB-UniRule"/>
</dbReference>
<dbReference type="Gene3D" id="2.120.10.80">
    <property type="entry name" value="Kelch-type beta propeller"/>
    <property type="match status" value="2"/>
</dbReference>
<dbReference type="HAMAP" id="MF_01195">
    <property type="entry name" value="NanM"/>
    <property type="match status" value="1"/>
</dbReference>
<dbReference type="InterPro" id="IPR011043">
    <property type="entry name" value="Gal_Oxase/kelch_b-propeller"/>
</dbReference>
<dbReference type="InterPro" id="IPR015915">
    <property type="entry name" value="Kelch-typ_b-propeller"/>
</dbReference>
<dbReference type="InterPro" id="IPR056734">
    <property type="entry name" value="NANM"/>
</dbReference>
<dbReference type="InterPro" id="IPR019936">
    <property type="entry name" value="NanM_proteobact"/>
</dbReference>
<dbReference type="NCBIfam" id="TIGR03547">
    <property type="entry name" value="muta_rot_YjhT"/>
    <property type="match status" value="1"/>
</dbReference>
<dbReference type="NCBIfam" id="NF010730">
    <property type="entry name" value="PRK14131.1"/>
    <property type="match status" value="1"/>
</dbReference>
<dbReference type="PANTHER" id="PTHR46093">
    <property type="entry name" value="ACYL-COA-BINDING DOMAIN-CONTAINING PROTEIN 5"/>
    <property type="match status" value="1"/>
</dbReference>
<dbReference type="PANTHER" id="PTHR46093:SF18">
    <property type="entry name" value="FIBRONECTIN TYPE-III DOMAIN-CONTAINING PROTEIN"/>
    <property type="match status" value="1"/>
</dbReference>
<dbReference type="Pfam" id="PF24996">
    <property type="entry name" value="NANM"/>
    <property type="match status" value="1"/>
</dbReference>
<dbReference type="SUPFAM" id="SSF50965">
    <property type="entry name" value="Galactose oxidase, central domain"/>
    <property type="match status" value="1"/>
</dbReference>
<organism>
    <name type="scientific">Vibrio vulnificus (strain YJ016)</name>
    <dbReference type="NCBI Taxonomy" id="196600"/>
    <lineage>
        <taxon>Bacteria</taxon>
        <taxon>Pseudomonadati</taxon>
        <taxon>Pseudomonadota</taxon>
        <taxon>Gammaproteobacteria</taxon>
        <taxon>Vibrionales</taxon>
        <taxon>Vibrionaceae</taxon>
        <taxon>Vibrio</taxon>
    </lineage>
</organism>
<sequence length="384" mass="41511">MMKTKYLLLPLLASSSLLSHMAFANNHWPDLPIGVKNGVSAQIGSKVYVGLGSAEKSFYVLDTQAPQNGWTLLAEFIGPERSGATATVVGENIFVFGGSGKASDDASSPIIFDTVYRFDTQTNRWHQVKTQTPVGLLGASSYSPDGKQVLFFGGYSKPLFDKYLADITRTDKKAQPEQWQKIVDDYMGMEPLAYQWNRDVLSFNPTNDKWDVVTRSPYLPNCGSATVIDGPSITLISGEIKPGLRTAEVKTFTYGELQPWQSTYALPAAKGQAQQEGIAGAYSGVVSNTLLVAGGANFHGAKAQFESGQMFAHNGLSKAYNSEIYAKQKGVWQQVGQLPEGLAYGASFSVKGGVLMVGGERADRTASTKVYLVGLNNNQIDIVD</sequence>
<feature type="signal peptide" evidence="1">
    <location>
        <begin position="1"/>
        <end position="24"/>
    </location>
</feature>
<feature type="chain" id="PRO_0000333074" description="N-acetylneuraminate epimerase">
    <location>
        <begin position="25"/>
        <end position="384"/>
    </location>
</feature>
<feature type="repeat" description="Kelch 1">
    <location>
        <begin position="46"/>
        <end position="90"/>
    </location>
</feature>
<feature type="repeat" description="Kelch 2">
    <location>
        <begin position="92"/>
        <end position="145"/>
    </location>
</feature>
<feature type="repeat" description="Kelch 3">
    <location>
        <begin position="147"/>
        <end position="184"/>
    </location>
</feature>
<feature type="repeat" description="Kelch 4">
    <location>
        <begin position="185"/>
        <end position="230"/>
    </location>
</feature>
<feature type="repeat" description="Kelch 5">
    <location>
        <begin position="233"/>
        <end position="281"/>
    </location>
</feature>
<feature type="repeat" description="Kelch 6">
    <location>
        <begin position="303"/>
        <end position="352"/>
    </location>
</feature>
<feature type="repeat" description="Kelch 7">
    <location>
        <begin position="354"/>
        <end position="383"/>
    </location>
</feature>
<feature type="active site" description="Proton acceptor" evidence="1">
    <location>
        <position position="239"/>
    </location>
</feature>
<proteinExistence type="inferred from homology"/>
<protein>
    <recommendedName>
        <fullName evidence="1">N-acetylneuraminate epimerase</fullName>
        <ecNumber evidence="1">5.1.3.24</ecNumber>
    </recommendedName>
    <alternativeName>
        <fullName evidence="1">N-acetylneuraminate mutarotase</fullName>
        <shortName evidence="1">Neu5Ac mutarotase</shortName>
    </alternativeName>
    <alternativeName>
        <fullName evidence="1">Sialic acid epimerase</fullName>
    </alternativeName>
</protein>
<reference key="1">
    <citation type="journal article" date="2003" name="Genome Res.">
        <title>Comparative genome analysis of Vibrio vulnificus, a marine pathogen.</title>
        <authorList>
            <person name="Chen C.-Y."/>
            <person name="Wu K.-M."/>
            <person name="Chang Y.-C."/>
            <person name="Chang C.-H."/>
            <person name="Tsai H.-C."/>
            <person name="Liao T.-L."/>
            <person name="Liu Y.-M."/>
            <person name="Chen H.-J."/>
            <person name="Shen A.B.-T."/>
            <person name="Li J.-C."/>
            <person name="Su T.-L."/>
            <person name="Shao C.-P."/>
            <person name="Lee C.-T."/>
            <person name="Hor L.-I."/>
            <person name="Tsai S.-F."/>
        </authorList>
    </citation>
    <scope>NUCLEOTIDE SEQUENCE [LARGE SCALE GENOMIC DNA]</scope>
    <source>
        <strain>YJ016</strain>
    </source>
</reference>
<accession>Q7MD39</accession>
<evidence type="ECO:0000255" key="1">
    <source>
        <dbReference type="HAMAP-Rule" id="MF_01195"/>
    </source>
</evidence>
<name>NANM_VIBVY</name>